<proteinExistence type="inferred from homology"/>
<accession>O29828</accession>
<comment type="similarity">
    <text evidence="1">Belongs to the BtpA family.</text>
</comment>
<sequence>MEKTVIGVVHLLPLPGSPEHTDLSAVIDKAVKDARAIEEGGADALILENYGDKPFLKEVGKETVAAMTVIACEVKRDVSIGLGINVLRNDAVAALAIAKAVNADFVRVNQLFFTSVSPEGILEGKAGEVMRYKKLVDCRAMIFADIAVKHAVHFASLEDYCLNAERSLADAVILTGKTTGGEVSLEELKYAKKTLKMPVLAGSGVNAENAARILKWCDGVIVGTYIKRGGLVDAERVRRIVRAAKG</sequence>
<keyword id="KW-1185">Reference proteome</keyword>
<reference key="1">
    <citation type="journal article" date="1997" name="Nature">
        <title>The complete genome sequence of the hyperthermophilic, sulphate-reducing archaeon Archaeoglobus fulgidus.</title>
        <authorList>
            <person name="Klenk H.-P."/>
            <person name="Clayton R.A."/>
            <person name="Tomb J.-F."/>
            <person name="White O."/>
            <person name="Nelson K.E."/>
            <person name="Ketchum K.A."/>
            <person name="Dodson R.J."/>
            <person name="Gwinn M.L."/>
            <person name="Hickey E.K."/>
            <person name="Peterson J.D."/>
            <person name="Richardson D.L."/>
            <person name="Kerlavage A.R."/>
            <person name="Graham D.E."/>
            <person name="Kyrpides N.C."/>
            <person name="Fleischmann R.D."/>
            <person name="Quackenbush J."/>
            <person name="Lee N.H."/>
            <person name="Sutton G.G."/>
            <person name="Gill S.R."/>
            <person name="Kirkness E.F."/>
            <person name="Dougherty B.A."/>
            <person name="McKenney K."/>
            <person name="Adams M.D."/>
            <person name="Loftus B.J."/>
            <person name="Peterson S.N."/>
            <person name="Reich C.I."/>
            <person name="McNeil L.K."/>
            <person name="Badger J.H."/>
            <person name="Glodek A."/>
            <person name="Zhou L."/>
            <person name="Overbeek R."/>
            <person name="Gocayne J.D."/>
            <person name="Weidman J.F."/>
            <person name="McDonald L.A."/>
            <person name="Utterback T.R."/>
            <person name="Cotton M.D."/>
            <person name="Spriggs T."/>
            <person name="Artiach P."/>
            <person name="Kaine B.P."/>
            <person name="Sykes S.M."/>
            <person name="Sadow P.W."/>
            <person name="D'Andrea K.P."/>
            <person name="Bowman C."/>
            <person name="Fujii C."/>
            <person name="Garland S.A."/>
            <person name="Mason T.M."/>
            <person name="Olsen G.J."/>
            <person name="Fraser C.M."/>
            <person name="Smith H.O."/>
            <person name="Woese C.R."/>
            <person name="Venter J.C."/>
        </authorList>
    </citation>
    <scope>NUCLEOTIDE SEQUENCE [LARGE SCALE GENOMIC DNA]</scope>
    <source>
        <strain>ATCC 49558 / DSM 4304 / JCM 9628 / NBRC 100126 / VC-16</strain>
    </source>
</reference>
<organism>
    <name type="scientific">Archaeoglobus fulgidus (strain ATCC 49558 / DSM 4304 / JCM 9628 / NBRC 100126 / VC-16)</name>
    <dbReference type="NCBI Taxonomy" id="224325"/>
    <lineage>
        <taxon>Archaea</taxon>
        <taxon>Methanobacteriati</taxon>
        <taxon>Methanobacteriota</taxon>
        <taxon>Archaeoglobi</taxon>
        <taxon>Archaeoglobales</taxon>
        <taxon>Archaeoglobaceae</taxon>
        <taxon>Archaeoglobus</taxon>
    </lineage>
</organism>
<gene>
    <name type="ordered locus">AF_0419</name>
</gene>
<feature type="chain" id="PRO_0000159330" description="Uncharacterized protein AF_0419">
    <location>
        <begin position="1"/>
        <end position="246"/>
    </location>
</feature>
<evidence type="ECO:0000305" key="1"/>
<name>Y419_ARCFU</name>
<dbReference type="EMBL" id="AE000782">
    <property type="protein sequence ID" value="AAB90814.1"/>
    <property type="molecule type" value="Genomic_DNA"/>
</dbReference>
<dbReference type="PIR" id="C69302">
    <property type="entry name" value="C69302"/>
</dbReference>
<dbReference type="RefSeq" id="WP_010877926.1">
    <property type="nucleotide sequence ID" value="NC_000917.1"/>
</dbReference>
<dbReference type="SMR" id="O29828"/>
<dbReference type="STRING" id="224325.AF_0419"/>
<dbReference type="PaxDb" id="224325-AF_0419"/>
<dbReference type="EnsemblBacteria" id="AAB90814">
    <property type="protein sequence ID" value="AAB90814"/>
    <property type="gene ID" value="AF_0419"/>
</dbReference>
<dbReference type="KEGG" id="afu:AF_0419"/>
<dbReference type="eggNOG" id="arCOG01982">
    <property type="taxonomic scope" value="Archaea"/>
</dbReference>
<dbReference type="HOGENOM" id="CLU_075239_1_0_2"/>
<dbReference type="OrthoDB" id="38543at2157"/>
<dbReference type="PhylomeDB" id="O29828"/>
<dbReference type="Proteomes" id="UP000002199">
    <property type="component" value="Chromosome"/>
</dbReference>
<dbReference type="Gene3D" id="3.20.20.70">
    <property type="entry name" value="Aldolase class I"/>
    <property type="match status" value="1"/>
</dbReference>
<dbReference type="InterPro" id="IPR013785">
    <property type="entry name" value="Aldolase_TIM"/>
</dbReference>
<dbReference type="InterPro" id="IPR005137">
    <property type="entry name" value="BtpA"/>
</dbReference>
<dbReference type="InterPro" id="IPR011060">
    <property type="entry name" value="RibuloseP-bd_barrel"/>
</dbReference>
<dbReference type="NCBIfam" id="TIGR00259">
    <property type="entry name" value="thylakoid_BtpA"/>
    <property type="match status" value="1"/>
</dbReference>
<dbReference type="PANTHER" id="PTHR21381:SF3">
    <property type="entry name" value="SGC REGION PROTEIN SGCQ-RELATED"/>
    <property type="match status" value="1"/>
</dbReference>
<dbReference type="PANTHER" id="PTHR21381">
    <property type="entry name" value="ZGC:162297"/>
    <property type="match status" value="1"/>
</dbReference>
<dbReference type="Pfam" id="PF03437">
    <property type="entry name" value="BtpA"/>
    <property type="match status" value="1"/>
</dbReference>
<dbReference type="PIRSF" id="PIRSF005956">
    <property type="entry name" value="BtpA"/>
    <property type="match status" value="1"/>
</dbReference>
<dbReference type="SUPFAM" id="SSF51366">
    <property type="entry name" value="Ribulose-phoshate binding barrel"/>
    <property type="match status" value="1"/>
</dbReference>
<protein>
    <recommendedName>
        <fullName>Uncharacterized protein AF_0419</fullName>
    </recommendedName>
</protein>